<feature type="initiator methionine" description="Removed" evidence="2">
    <location>
        <position position="1"/>
    </location>
</feature>
<feature type="chain" id="PRO_0000163757" description="Phosducin-like protein">
    <location>
        <begin position="2"/>
        <end position="301"/>
    </location>
</feature>
<feature type="domain" description="Phosducin" evidence="4">
    <location>
        <begin position="36"/>
        <end position="299"/>
    </location>
</feature>
<feature type="region of interest" description="Disordered" evidence="5">
    <location>
        <begin position="15"/>
        <end position="60"/>
    </location>
</feature>
<feature type="region of interest" description="Thioredoxin fold" evidence="1">
    <location>
        <begin position="158"/>
        <end position="301"/>
    </location>
</feature>
<feature type="compositionally biased region" description="Low complexity" evidence="5">
    <location>
        <begin position="36"/>
        <end position="49"/>
    </location>
</feature>
<feature type="modified residue" description="N-acetylthreonine" evidence="2">
    <location>
        <position position="2"/>
    </location>
</feature>
<feature type="modified residue" description="Phosphoserine" evidence="8">
    <location>
        <position position="20"/>
    </location>
</feature>
<feature type="modified residue" description="Phosphoserine" evidence="8">
    <location>
        <position position="25"/>
    </location>
</feature>
<feature type="modified residue" description="Phosphoserine" evidence="2">
    <location>
        <position position="226"/>
    </location>
</feature>
<feature type="modified residue" description="Phosphoserine" evidence="8">
    <location>
        <position position="293"/>
    </location>
</feature>
<feature type="modified residue" description="Phosphoserine" evidence="8">
    <location>
        <position position="296"/>
    </location>
</feature>
<feature type="splice variant" id="VSP_004704" description="In isoform Short." evidence="6">
    <location>
        <begin position="1"/>
        <end position="83"/>
    </location>
</feature>
<evidence type="ECO:0000250" key="1"/>
<evidence type="ECO:0000250" key="2">
    <source>
        <dbReference type="UniProtKB" id="Q13371"/>
    </source>
</evidence>
<evidence type="ECO:0000250" key="3">
    <source>
        <dbReference type="UniProtKB" id="Q9DBX2"/>
    </source>
</evidence>
<evidence type="ECO:0000255" key="4"/>
<evidence type="ECO:0000256" key="5">
    <source>
        <dbReference type="SAM" id="MobiDB-lite"/>
    </source>
</evidence>
<evidence type="ECO:0000303" key="6">
    <source>
    </source>
</evidence>
<evidence type="ECO:0000305" key="7"/>
<evidence type="ECO:0007744" key="8">
    <source>
    </source>
</evidence>
<organism>
    <name type="scientific">Rattus norvegicus</name>
    <name type="common">Rat</name>
    <dbReference type="NCBI Taxonomy" id="10116"/>
    <lineage>
        <taxon>Eukaryota</taxon>
        <taxon>Metazoa</taxon>
        <taxon>Chordata</taxon>
        <taxon>Craniata</taxon>
        <taxon>Vertebrata</taxon>
        <taxon>Euteleostomi</taxon>
        <taxon>Mammalia</taxon>
        <taxon>Eutheria</taxon>
        <taxon>Euarchontoglires</taxon>
        <taxon>Glires</taxon>
        <taxon>Rodentia</taxon>
        <taxon>Myomorpha</taxon>
        <taxon>Muroidea</taxon>
        <taxon>Muridae</taxon>
        <taxon>Murinae</taxon>
        <taxon>Rattus</taxon>
    </lineage>
</organism>
<proteinExistence type="evidence at protein level"/>
<keyword id="KW-0007">Acetylation</keyword>
<keyword id="KW-0025">Alternative splicing</keyword>
<keyword id="KW-0966">Cell projection</keyword>
<keyword id="KW-0143">Chaperone</keyword>
<keyword id="KW-0970">Cilium biogenesis/degradation</keyword>
<keyword id="KW-0597">Phosphoprotein</keyword>
<keyword id="KW-1185">Reference proteome</keyword>
<keyword id="KW-0716">Sensory transduction</keyword>
<keyword id="KW-0844">Vision</keyword>
<dbReference type="EMBL" id="L15354">
    <property type="protein sequence ID" value="AAB00333.1"/>
    <property type="molecule type" value="mRNA"/>
</dbReference>
<dbReference type="EMBL" id="L15355">
    <property type="protein sequence ID" value="AAB00334.1"/>
    <property type="molecule type" value="mRNA"/>
</dbReference>
<dbReference type="EMBL" id="AF080435">
    <property type="protein sequence ID" value="AAC77925.1"/>
    <property type="molecule type" value="Genomic_DNA"/>
</dbReference>
<dbReference type="EMBL" id="AF080433">
    <property type="protein sequence ID" value="AAC77925.1"/>
    <property type="status" value="JOINED"/>
    <property type="molecule type" value="Genomic_DNA"/>
</dbReference>
<dbReference type="EMBL" id="AF080434">
    <property type="protein sequence ID" value="AAC77925.1"/>
    <property type="status" value="JOINED"/>
    <property type="molecule type" value="Genomic_DNA"/>
</dbReference>
<dbReference type="EMBL" id="BC097322">
    <property type="protein sequence ID" value="AAH97322.1"/>
    <property type="molecule type" value="mRNA"/>
</dbReference>
<dbReference type="PIR" id="A58928">
    <property type="entry name" value="A58928"/>
</dbReference>
<dbReference type="RefSeq" id="NP_071583.1">
    <molecule id="Q63737-1"/>
    <property type="nucleotide sequence ID" value="NM_022247.2"/>
</dbReference>
<dbReference type="RefSeq" id="XP_038961705.1">
    <molecule id="Q63737-2"/>
    <property type="nucleotide sequence ID" value="XM_039105777.2"/>
</dbReference>
<dbReference type="RefSeq" id="XP_063140566.1">
    <molecule id="Q63737-1"/>
    <property type="nucleotide sequence ID" value="XM_063284496.1"/>
</dbReference>
<dbReference type="SMR" id="Q63737"/>
<dbReference type="BioGRID" id="248932">
    <property type="interactions" value="1"/>
</dbReference>
<dbReference type="CORUM" id="Q63737"/>
<dbReference type="FunCoup" id="Q63737">
    <property type="interactions" value="3483"/>
</dbReference>
<dbReference type="STRING" id="10116.ENSRNOP00000012160"/>
<dbReference type="GlyGen" id="Q63737">
    <property type="glycosylation" value="1 site"/>
</dbReference>
<dbReference type="iPTMnet" id="Q63737"/>
<dbReference type="PhosphoSitePlus" id="Q63737"/>
<dbReference type="PaxDb" id="10116-ENSRNOP00000012160"/>
<dbReference type="Ensembl" id="ENSRNOT00000012160.6">
    <molecule id="Q63737-1"/>
    <property type="protein sequence ID" value="ENSRNOP00000012160.2"/>
    <property type="gene ID" value="ENSRNOG00000008484.6"/>
</dbReference>
<dbReference type="GeneID" id="64013"/>
<dbReference type="KEGG" id="rno:64013"/>
<dbReference type="UCSC" id="RGD:621135">
    <molecule id="Q63737-1"/>
    <property type="organism name" value="rat"/>
</dbReference>
<dbReference type="AGR" id="RGD:621135"/>
<dbReference type="CTD" id="5082"/>
<dbReference type="RGD" id="621135">
    <property type="gene designation" value="Pdcl"/>
</dbReference>
<dbReference type="eggNOG" id="KOG3171">
    <property type="taxonomic scope" value="Eukaryota"/>
</dbReference>
<dbReference type="GeneTree" id="ENSGT00940000159569"/>
<dbReference type="HOGENOM" id="CLU_085598_0_0_1"/>
<dbReference type="InParanoid" id="Q63737"/>
<dbReference type="OMA" id="GIIEMMP"/>
<dbReference type="OrthoDB" id="70588at2759"/>
<dbReference type="PhylomeDB" id="Q63737"/>
<dbReference type="TreeFam" id="TF315179"/>
<dbReference type="Reactome" id="R-RNO-6814122">
    <property type="pathway name" value="Cooperation of PDCL (PhLP1) and TRiC/CCT in G-protein beta folding"/>
</dbReference>
<dbReference type="PRO" id="PR:Q63737"/>
<dbReference type="Proteomes" id="UP000002494">
    <property type="component" value="Chromosome 3"/>
</dbReference>
<dbReference type="Bgee" id="ENSRNOG00000008484">
    <property type="expression patterns" value="Expressed in thymus and 20 other cell types or tissues"/>
</dbReference>
<dbReference type="GO" id="GO:0005929">
    <property type="term" value="C:cilium"/>
    <property type="evidence" value="ECO:0007669"/>
    <property type="project" value="UniProtKB-SubCell"/>
</dbReference>
<dbReference type="GO" id="GO:0005737">
    <property type="term" value="C:cytoplasm"/>
    <property type="evidence" value="ECO:0000318"/>
    <property type="project" value="GO_Central"/>
</dbReference>
<dbReference type="GO" id="GO:0044877">
    <property type="term" value="F:protein-containing complex binding"/>
    <property type="evidence" value="ECO:0000314"/>
    <property type="project" value="RGD"/>
</dbReference>
<dbReference type="GO" id="GO:0030030">
    <property type="term" value="P:cell projection organization"/>
    <property type="evidence" value="ECO:0007669"/>
    <property type="project" value="UniProtKB-KW"/>
</dbReference>
<dbReference type="GO" id="GO:1902605">
    <property type="term" value="P:heterotrimeric G-protein complex assembly"/>
    <property type="evidence" value="ECO:0000266"/>
    <property type="project" value="RGD"/>
</dbReference>
<dbReference type="GO" id="GO:0061084">
    <property type="term" value="P:negative regulation of protein refolding"/>
    <property type="evidence" value="ECO:0000314"/>
    <property type="project" value="RGD"/>
</dbReference>
<dbReference type="GO" id="GO:0045880">
    <property type="term" value="P:positive regulation of smoothened signaling pathway"/>
    <property type="evidence" value="ECO:0000250"/>
    <property type="project" value="UniProtKB"/>
</dbReference>
<dbReference type="GO" id="GO:0006457">
    <property type="term" value="P:protein folding"/>
    <property type="evidence" value="ECO:0000314"/>
    <property type="project" value="RGD"/>
</dbReference>
<dbReference type="GO" id="GO:0008277">
    <property type="term" value="P:regulation of G protein-coupled receptor signaling pathway"/>
    <property type="evidence" value="ECO:0007669"/>
    <property type="project" value="InterPro"/>
</dbReference>
<dbReference type="GO" id="GO:0007601">
    <property type="term" value="P:visual perception"/>
    <property type="evidence" value="ECO:0000266"/>
    <property type="project" value="RGD"/>
</dbReference>
<dbReference type="CDD" id="cd02987">
    <property type="entry name" value="Phd_like_Phd"/>
    <property type="match status" value="1"/>
</dbReference>
<dbReference type="FunFam" id="3.40.30.10:FF:000072">
    <property type="entry name" value="Phosducin like"/>
    <property type="match status" value="1"/>
</dbReference>
<dbReference type="Gene3D" id="3.40.30.10">
    <property type="entry name" value="Glutaredoxin"/>
    <property type="match status" value="1"/>
</dbReference>
<dbReference type="Gene3D" id="1.10.168.10">
    <property type="entry name" value="Phosducin, domain 2"/>
    <property type="match status" value="1"/>
</dbReference>
<dbReference type="InterPro" id="IPR001200">
    <property type="entry name" value="Phosducin"/>
</dbReference>
<dbReference type="InterPro" id="IPR051499">
    <property type="entry name" value="Phosducin-like_reg"/>
</dbReference>
<dbReference type="InterPro" id="IPR023196">
    <property type="entry name" value="Phosducin_N_dom_sf"/>
</dbReference>
<dbReference type="InterPro" id="IPR024253">
    <property type="entry name" value="Phosducin_thioredoxin-like_dom"/>
</dbReference>
<dbReference type="InterPro" id="IPR036249">
    <property type="entry name" value="Thioredoxin-like_sf"/>
</dbReference>
<dbReference type="PANTHER" id="PTHR46052">
    <property type="entry name" value="PHOSDUCIN-LIKE PROTEIN"/>
    <property type="match status" value="1"/>
</dbReference>
<dbReference type="PANTHER" id="PTHR46052:SF4">
    <property type="entry name" value="PHOSDUCIN-LIKE PROTEIN"/>
    <property type="match status" value="1"/>
</dbReference>
<dbReference type="Pfam" id="PF02114">
    <property type="entry name" value="Phosducin"/>
    <property type="match status" value="1"/>
</dbReference>
<dbReference type="PRINTS" id="PR00677">
    <property type="entry name" value="PHOSDUCIN"/>
</dbReference>
<dbReference type="SUPFAM" id="SSF52833">
    <property type="entry name" value="Thioredoxin-like"/>
    <property type="match status" value="1"/>
</dbReference>
<reference key="1">
    <citation type="journal article" date="1993" name="Proc. Natl. Acad. Sci. U.S.A.">
        <title>Phosducin-like protein: an ethanol-responsive potential modulator of guanine nucleotide-binding protein function.</title>
        <authorList>
            <person name="Miles M.F."/>
            <person name="Barhite S."/>
            <person name="Sganga M."/>
            <person name="Elliott M."/>
        </authorList>
    </citation>
    <scope>NUCLEOTIDE SEQUENCE [MRNA] (ISOFORMS LONG AND SHORT)</scope>
    <source>
        <tissue>Brain</tissue>
    </source>
</reference>
<reference key="2">
    <citation type="journal article" date="1999" name="Biochim. Biophys. Acta">
        <title>Cloning and characterization of the rat and human phosducin-like protein genes: structure, expression and chromosomal localization.</title>
        <authorList>
            <person name="Thibault C."/>
            <person name="Wang J.-F."/>
            <person name="Charnas R."/>
            <person name="Mirel D."/>
            <person name="Barhite S."/>
            <person name="Miles M.F."/>
        </authorList>
    </citation>
    <scope>NUCLEOTIDE SEQUENCE [GENOMIC DNA]</scope>
    <source>
        <strain>Fischer</strain>
    </source>
</reference>
<reference key="3">
    <citation type="journal article" date="2004" name="Genome Res.">
        <title>The status, quality, and expansion of the NIH full-length cDNA project: the Mammalian Gene Collection (MGC).</title>
        <authorList>
            <consortium name="The MGC Project Team"/>
        </authorList>
    </citation>
    <scope>NUCLEOTIDE SEQUENCE [LARGE SCALE MRNA] (ISOFORM LONG)</scope>
    <source>
        <tissue>Testis</tissue>
    </source>
</reference>
<reference key="4">
    <citation type="journal article" date="1997" name="J. Biol. Chem.">
        <title>Interaction of phosducin-like protein with G protein betagamma subunits.</title>
        <authorList>
            <person name="Thibault C."/>
            <person name="Sganga M.W."/>
            <person name="Miles M.F."/>
        </authorList>
    </citation>
    <scope>CHARACTERIZATION</scope>
</reference>
<reference key="5">
    <citation type="journal article" date="2012" name="Nat. Commun.">
        <title>Quantitative maps of protein phosphorylation sites across 14 different rat organs and tissues.</title>
        <authorList>
            <person name="Lundby A."/>
            <person name="Secher A."/>
            <person name="Lage K."/>
            <person name="Nordsborg N.B."/>
            <person name="Dmytriyev A."/>
            <person name="Lundby C."/>
            <person name="Olsen J.V."/>
        </authorList>
    </citation>
    <scope>PHOSPHORYLATION [LARGE SCALE ANALYSIS] AT SER-20; SER-25; SER-293 AND SER-296</scope>
    <scope>IDENTIFICATION BY MASS SPECTROMETRY [LARGE SCALE ANALYSIS]</scope>
</reference>
<sequence length="301" mass="34274">MTTLDDKLLGEKLQYYYSTSEDEDSDHEDKDRGRGAPASSSTPAEAELAGEGISVNTGPKGVINDWRRFKQLETEQREEQCREMERLIKKLSMSCRSHLDEEEEQQKQKDLQEKISGKMTLKECGMMDKNLDDEEFLQQYRKQRMDEMRQQLHKGPQFKQVLEIPSGEGFLDMIDKEQKSTLIMVHIYEDGVPGTEAMNGCMICLAAEYPTVKFCRVRSSVIGASSRFTRNALPALLIYKAGELIGNFVRVTDQLGEDFFAVDLEAFLQEFGLLPEKEVLVLTSVRNSATCHSEDSDLEID</sequence>
<name>PHLP_RAT</name>
<accession>Q63737</accession>
<accession>Q4V8L9</accession>
<accession>Q63738</accession>
<gene>
    <name type="primary">Pdcl</name>
</gene>
<protein>
    <recommendedName>
        <fullName>Phosducin-like protein</fullName>
        <shortName>PHLP</shortName>
    </recommendedName>
</protein>
<comment type="function">
    <text evidence="3">Functions as a co-chaperone for CCT in the assembly of heterotrimeric G protein complexes, facilitates the assembly of both Gbeta-Ggamma and RGS-Gbeta5 heterodimers. Also acts as a positive regulator of hedgehog signaling and regulates ciliary function.</text>
</comment>
<comment type="subunit">
    <text evidence="1">Interacts with the CCT chaperonin complex (By similarity). Forms a complex with the beta and gamma subunits of the GTP-binding protein, transducin.</text>
</comment>
<comment type="subcellular location">
    <subcellularLocation>
        <location evidence="3">Cell projection</location>
        <location evidence="3">Cilium</location>
    </subcellularLocation>
</comment>
<comment type="alternative products">
    <event type="alternative splicing"/>
    <isoform>
        <id>Q63737-1</id>
        <name>Long</name>
        <sequence type="displayed"/>
    </isoform>
    <isoform>
        <id>Q63737-2</id>
        <name>Short</name>
        <sequence type="described" ref="VSP_004704"/>
    </isoform>
    <text>Additional isoforms seem to exist.</text>
</comment>
<comment type="similarity">
    <text evidence="7">Belongs to the phosducin family.</text>
</comment>